<dbReference type="EC" id="2.5.1.145" evidence="1"/>
<dbReference type="EMBL" id="FM954972">
    <property type="protein sequence ID" value="CAV17531.1"/>
    <property type="molecule type" value="Genomic_DNA"/>
</dbReference>
<dbReference type="SMR" id="B7VJ77"/>
<dbReference type="STRING" id="575788.VS_0526"/>
<dbReference type="KEGG" id="vsp:VS_0526"/>
<dbReference type="PATRIC" id="fig|575788.5.peg.1890"/>
<dbReference type="eggNOG" id="COG0682">
    <property type="taxonomic scope" value="Bacteria"/>
</dbReference>
<dbReference type="HOGENOM" id="CLU_013386_1_0_6"/>
<dbReference type="UniPathway" id="UPA00664"/>
<dbReference type="Proteomes" id="UP000009100">
    <property type="component" value="Chromosome 1"/>
</dbReference>
<dbReference type="GO" id="GO:0005886">
    <property type="term" value="C:plasma membrane"/>
    <property type="evidence" value="ECO:0007669"/>
    <property type="project" value="UniProtKB-SubCell"/>
</dbReference>
<dbReference type="GO" id="GO:0008961">
    <property type="term" value="F:phosphatidylglycerol-prolipoprotein diacylglyceryl transferase activity"/>
    <property type="evidence" value="ECO:0007669"/>
    <property type="project" value="UniProtKB-UniRule"/>
</dbReference>
<dbReference type="GO" id="GO:0042158">
    <property type="term" value="P:lipoprotein biosynthetic process"/>
    <property type="evidence" value="ECO:0007669"/>
    <property type="project" value="UniProtKB-UniRule"/>
</dbReference>
<dbReference type="HAMAP" id="MF_01147">
    <property type="entry name" value="Lgt"/>
    <property type="match status" value="1"/>
</dbReference>
<dbReference type="InterPro" id="IPR001640">
    <property type="entry name" value="Lgt"/>
</dbReference>
<dbReference type="NCBIfam" id="TIGR00544">
    <property type="entry name" value="lgt"/>
    <property type="match status" value="1"/>
</dbReference>
<dbReference type="PANTHER" id="PTHR30589:SF0">
    <property type="entry name" value="PHOSPHATIDYLGLYCEROL--PROLIPOPROTEIN DIACYLGLYCERYL TRANSFERASE"/>
    <property type="match status" value="1"/>
</dbReference>
<dbReference type="PANTHER" id="PTHR30589">
    <property type="entry name" value="PROLIPOPROTEIN DIACYLGLYCERYL TRANSFERASE"/>
    <property type="match status" value="1"/>
</dbReference>
<dbReference type="Pfam" id="PF01790">
    <property type="entry name" value="LGT"/>
    <property type="match status" value="1"/>
</dbReference>
<dbReference type="PROSITE" id="PS01311">
    <property type="entry name" value="LGT"/>
    <property type="match status" value="1"/>
</dbReference>
<reference key="1">
    <citation type="submission" date="2009-02" db="EMBL/GenBank/DDBJ databases">
        <title>Vibrio splendidus str. LGP32 complete genome.</title>
        <authorList>
            <person name="Mazel D."/>
            <person name="Le Roux F."/>
        </authorList>
    </citation>
    <scope>NUCLEOTIDE SEQUENCE [LARGE SCALE GENOMIC DNA]</scope>
    <source>
        <strain>LGP32</strain>
    </source>
</reference>
<keyword id="KW-0997">Cell inner membrane</keyword>
<keyword id="KW-1003">Cell membrane</keyword>
<keyword id="KW-0472">Membrane</keyword>
<keyword id="KW-0808">Transferase</keyword>
<keyword id="KW-0812">Transmembrane</keyword>
<keyword id="KW-1133">Transmembrane helix</keyword>
<sequence length="273" mass="30723">MSQGFIEFPNIDPVLIELGPISVRWYGLMYLVGFMFALWLANRRADQPDSGWTREQVSDLLFAGFLGVVLGGRIGYVLFYNFGLFIDDPLYLFKVWTGGMSFHGGLLGVITAMLWYAKKNGRTFFGVADMIAPLVPFGLGMGRMGNFMNSELWGRVTDVPWAIVFPNGGPLPRHPSQLYEMALEGIVLFFILNWFIKKPRPLGSVSGLFLAGYGTFRFLVEYVREPDAQLGLFGGFISMGQILSLPMVIIGVLMMVWAYKRGHYKDELPQQTK</sequence>
<protein>
    <recommendedName>
        <fullName evidence="1">Phosphatidylglycerol--prolipoprotein diacylglyceryl transferase</fullName>
        <ecNumber evidence="1">2.5.1.145</ecNumber>
    </recommendedName>
</protein>
<gene>
    <name evidence="1" type="primary">lgt</name>
    <name type="ordered locus">VS_0526</name>
</gene>
<accession>B7VJ77</accession>
<evidence type="ECO:0000255" key="1">
    <source>
        <dbReference type="HAMAP-Rule" id="MF_01147"/>
    </source>
</evidence>
<organism>
    <name type="scientific">Vibrio atlanticus (strain LGP32)</name>
    <name type="common">Vibrio splendidus (strain Mel32)</name>
    <dbReference type="NCBI Taxonomy" id="575788"/>
    <lineage>
        <taxon>Bacteria</taxon>
        <taxon>Pseudomonadati</taxon>
        <taxon>Pseudomonadota</taxon>
        <taxon>Gammaproteobacteria</taxon>
        <taxon>Vibrionales</taxon>
        <taxon>Vibrionaceae</taxon>
        <taxon>Vibrio</taxon>
    </lineage>
</organism>
<feature type="chain" id="PRO_1000164157" description="Phosphatidylglycerol--prolipoprotein diacylglyceryl transferase">
    <location>
        <begin position="1"/>
        <end position="273"/>
    </location>
</feature>
<feature type="transmembrane region" description="Helical" evidence="1">
    <location>
        <begin position="21"/>
        <end position="41"/>
    </location>
</feature>
<feature type="transmembrane region" description="Helical" evidence="1">
    <location>
        <begin position="60"/>
        <end position="80"/>
    </location>
</feature>
<feature type="transmembrane region" description="Helical" evidence="1">
    <location>
        <begin position="95"/>
        <end position="115"/>
    </location>
</feature>
<feature type="transmembrane region" description="Helical" evidence="1">
    <location>
        <begin position="124"/>
        <end position="144"/>
    </location>
</feature>
<feature type="transmembrane region" description="Helical" evidence="1">
    <location>
        <begin position="176"/>
        <end position="196"/>
    </location>
</feature>
<feature type="transmembrane region" description="Helical" evidence="1">
    <location>
        <begin position="203"/>
        <end position="223"/>
    </location>
</feature>
<feature type="transmembrane region" description="Helical" evidence="1">
    <location>
        <begin position="236"/>
        <end position="256"/>
    </location>
</feature>
<feature type="binding site" evidence="1">
    <location>
        <position position="143"/>
    </location>
    <ligand>
        <name>a 1,2-diacyl-sn-glycero-3-phospho-(1'-sn-glycerol)</name>
        <dbReference type="ChEBI" id="CHEBI:64716"/>
    </ligand>
</feature>
<proteinExistence type="inferred from homology"/>
<comment type="function">
    <text evidence="1">Catalyzes the transfer of the diacylglyceryl group from phosphatidylglycerol to the sulfhydryl group of the N-terminal cysteine of a prolipoprotein, the first step in the formation of mature lipoproteins.</text>
</comment>
<comment type="catalytic activity">
    <reaction evidence="1">
        <text>L-cysteinyl-[prolipoprotein] + a 1,2-diacyl-sn-glycero-3-phospho-(1'-sn-glycerol) = an S-1,2-diacyl-sn-glyceryl-L-cysteinyl-[prolipoprotein] + sn-glycerol 1-phosphate + H(+)</text>
        <dbReference type="Rhea" id="RHEA:56712"/>
        <dbReference type="Rhea" id="RHEA-COMP:14679"/>
        <dbReference type="Rhea" id="RHEA-COMP:14680"/>
        <dbReference type="ChEBI" id="CHEBI:15378"/>
        <dbReference type="ChEBI" id="CHEBI:29950"/>
        <dbReference type="ChEBI" id="CHEBI:57685"/>
        <dbReference type="ChEBI" id="CHEBI:64716"/>
        <dbReference type="ChEBI" id="CHEBI:140658"/>
        <dbReference type="EC" id="2.5.1.145"/>
    </reaction>
</comment>
<comment type="pathway">
    <text evidence="1">Protein modification; lipoprotein biosynthesis (diacylglyceryl transfer).</text>
</comment>
<comment type="subcellular location">
    <subcellularLocation>
        <location evidence="1">Cell inner membrane</location>
        <topology evidence="1">Multi-pass membrane protein</topology>
    </subcellularLocation>
</comment>
<comment type="similarity">
    <text evidence="1">Belongs to the Lgt family.</text>
</comment>
<name>LGT_VIBA3</name>